<keyword id="KW-0106">Calcium</keyword>
<keyword id="KW-1015">Disulfide bond</keyword>
<keyword id="KW-0378">Hydrolase</keyword>
<keyword id="KW-0442">Lipid degradation</keyword>
<keyword id="KW-0443">Lipid metabolism</keyword>
<keyword id="KW-0479">Metal-binding</keyword>
<keyword id="KW-0964">Secreted</keyword>
<keyword id="KW-0732">Signal</keyword>
<name>PA2BD_LATSE</name>
<feature type="signal peptide" evidence="2">
    <location>
        <begin position="1"/>
        <end position="21"/>
    </location>
</feature>
<feature type="propeptide" id="PRO_0000022904" evidence="1">
    <location>
        <begin position="22"/>
        <end position="27"/>
    </location>
</feature>
<feature type="chain" id="PRO_0000022905" description="Basic phospholipase A2 cPt10">
    <location>
        <begin position="28"/>
        <end position="145"/>
    </location>
</feature>
<feature type="active site" evidence="1">
    <location>
        <position position="75"/>
    </location>
</feature>
<feature type="active site" evidence="1">
    <location>
        <position position="119"/>
    </location>
</feature>
<feature type="binding site" evidence="1">
    <location>
        <position position="55"/>
    </location>
    <ligand>
        <name>Ca(2+)</name>
        <dbReference type="ChEBI" id="CHEBI:29108"/>
    </ligand>
</feature>
<feature type="binding site" evidence="1">
    <location>
        <position position="57"/>
    </location>
    <ligand>
        <name>Ca(2+)</name>
        <dbReference type="ChEBI" id="CHEBI:29108"/>
    </ligand>
</feature>
<feature type="binding site" evidence="1">
    <location>
        <position position="59"/>
    </location>
    <ligand>
        <name>Ca(2+)</name>
        <dbReference type="ChEBI" id="CHEBI:29108"/>
    </ligand>
</feature>
<feature type="binding site" evidence="1">
    <location>
        <position position="76"/>
    </location>
    <ligand>
        <name>Ca(2+)</name>
        <dbReference type="ChEBI" id="CHEBI:29108"/>
    </ligand>
</feature>
<feature type="disulfide bond" evidence="1">
    <location>
        <begin position="38"/>
        <end position="98"/>
    </location>
</feature>
<feature type="disulfide bond" evidence="1">
    <location>
        <begin position="54"/>
        <end position="144"/>
    </location>
</feature>
<feature type="disulfide bond" evidence="1">
    <location>
        <begin position="56"/>
        <end position="72"/>
    </location>
</feature>
<feature type="disulfide bond" evidence="1">
    <location>
        <begin position="71"/>
        <end position="125"/>
    </location>
</feature>
<feature type="disulfide bond" evidence="1">
    <location>
        <begin position="78"/>
        <end position="118"/>
    </location>
</feature>
<feature type="disulfide bond" evidence="1">
    <location>
        <begin position="87"/>
        <end position="111"/>
    </location>
</feature>
<feature type="disulfide bond" evidence="1">
    <location>
        <begin position="105"/>
        <end position="116"/>
    </location>
</feature>
<protein>
    <recommendedName>
        <fullName>Basic phospholipase A2 cPt10</fullName>
        <shortName>svPLA2</shortName>
        <ecNumber>3.1.1.4</ecNumber>
    </recommendedName>
    <alternativeName>
        <fullName>Phosphatidylcholine 2-acylhydrolase</fullName>
    </alternativeName>
</protein>
<dbReference type="EC" id="3.1.1.4"/>
<dbReference type="EMBL" id="AB037412">
    <property type="protein sequence ID" value="BAB03299.1"/>
    <property type="molecule type" value="mRNA"/>
</dbReference>
<dbReference type="SMR" id="Q9I844"/>
<dbReference type="GO" id="GO:0005576">
    <property type="term" value="C:extracellular region"/>
    <property type="evidence" value="ECO:0007669"/>
    <property type="project" value="UniProtKB-SubCell"/>
</dbReference>
<dbReference type="GO" id="GO:0005509">
    <property type="term" value="F:calcium ion binding"/>
    <property type="evidence" value="ECO:0007669"/>
    <property type="project" value="InterPro"/>
</dbReference>
<dbReference type="GO" id="GO:0047498">
    <property type="term" value="F:calcium-dependent phospholipase A2 activity"/>
    <property type="evidence" value="ECO:0007669"/>
    <property type="project" value="TreeGrafter"/>
</dbReference>
<dbReference type="GO" id="GO:0005543">
    <property type="term" value="F:phospholipid binding"/>
    <property type="evidence" value="ECO:0007669"/>
    <property type="project" value="TreeGrafter"/>
</dbReference>
<dbReference type="GO" id="GO:0050482">
    <property type="term" value="P:arachidonate secretion"/>
    <property type="evidence" value="ECO:0007669"/>
    <property type="project" value="InterPro"/>
</dbReference>
<dbReference type="GO" id="GO:0016042">
    <property type="term" value="P:lipid catabolic process"/>
    <property type="evidence" value="ECO:0007669"/>
    <property type="project" value="UniProtKB-KW"/>
</dbReference>
<dbReference type="GO" id="GO:0006644">
    <property type="term" value="P:phospholipid metabolic process"/>
    <property type="evidence" value="ECO:0007669"/>
    <property type="project" value="InterPro"/>
</dbReference>
<dbReference type="CDD" id="cd00125">
    <property type="entry name" value="PLA2c"/>
    <property type="match status" value="1"/>
</dbReference>
<dbReference type="FunFam" id="1.20.90.10:FF:000007">
    <property type="entry name" value="Acidic phospholipase A2"/>
    <property type="match status" value="1"/>
</dbReference>
<dbReference type="Gene3D" id="1.20.90.10">
    <property type="entry name" value="Phospholipase A2 domain"/>
    <property type="match status" value="1"/>
</dbReference>
<dbReference type="InterPro" id="IPR001211">
    <property type="entry name" value="PLipase_A2"/>
</dbReference>
<dbReference type="InterPro" id="IPR033112">
    <property type="entry name" value="PLipase_A2_Asp_AS"/>
</dbReference>
<dbReference type="InterPro" id="IPR016090">
    <property type="entry name" value="PLipase_A2_dom"/>
</dbReference>
<dbReference type="InterPro" id="IPR036444">
    <property type="entry name" value="PLipase_A2_dom_sf"/>
</dbReference>
<dbReference type="InterPro" id="IPR033113">
    <property type="entry name" value="PLipase_A2_His_AS"/>
</dbReference>
<dbReference type="PANTHER" id="PTHR11716:SF51">
    <property type="entry name" value="PHOSPHOLIPASE A2"/>
    <property type="match status" value="1"/>
</dbReference>
<dbReference type="PANTHER" id="PTHR11716">
    <property type="entry name" value="PHOSPHOLIPASE A2 FAMILY MEMBER"/>
    <property type="match status" value="1"/>
</dbReference>
<dbReference type="Pfam" id="PF00068">
    <property type="entry name" value="Phospholip_A2_1"/>
    <property type="match status" value="1"/>
</dbReference>
<dbReference type="PRINTS" id="PR00389">
    <property type="entry name" value="PHPHLIPASEA2"/>
</dbReference>
<dbReference type="SMART" id="SM00085">
    <property type="entry name" value="PA2c"/>
    <property type="match status" value="1"/>
</dbReference>
<dbReference type="SUPFAM" id="SSF48619">
    <property type="entry name" value="Phospholipase A2, PLA2"/>
    <property type="match status" value="1"/>
</dbReference>
<dbReference type="PROSITE" id="PS00119">
    <property type="entry name" value="PA2_ASP"/>
    <property type="match status" value="1"/>
</dbReference>
<dbReference type="PROSITE" id="PS00118">
    <property type="entry name" value="PA2_HIS"/>
    <property type="match status" value="1"/>
</dbReference>
<accession>Q9I844</accession>
<proteinExistence type="evidence at transcript level"/>
<sequence length="145" mass="16073">MYPAHLLVLLAVCVSLLGASAIPPLPLNLVQFTYLIQCANKGSRASYHYADYGCYCGAGGSGTPVDELDRCCKIHDDCYGEAEKMGCYPKLTMYNYYCGTEGPYCNTKTDCQRYVCACDLQAAKCFARSPYNNKNYNIDTSKRCK</sequence>
<organism>
    <name type="scientific">Laticauda semifasciata</name>
    <name type="common">Black-banded sea krait</name>
    <name type="synonym">Pseudolaticauda semifasciata</name>
    <dbReference type="NCBI Taxonomy" id="8631"/>
    <lineage>
        <taxon>Eukaryota</taxon>
        <taxon>Metazoa</taxon>
        <taxon>Chordata</taxon>
        <taxon>Craniata</taxon>
        <taxon>Vertebrata</taxon>
        <taxon>Euteleostomi</taxon>
        <taxon>Lepidosauria</taxon>
        <taxon>Squamata</taxon>
        <taxon>Bifurcata</taxon>
        <taxon>Unidentata</taxon>
        <taxon>Episquamata</taxon>
        <taxon>Toxicofera</taxon>
        <taxon>Serpentes</taxon>
        <taxon>Colubroidea</taxon>
        <taxon>Elapidae</taxon>
        <taxon>Laticaudinae</taxon>
        <taxon>Laticauda</taxon>
    </lineage>
</organism>
<evidence type="ECO:0000250" key="1"/>
<evidence type="ECO:0000255" key="2"/>
<evidence type="ECO:0000255" key="3">
    <source>
        <dbReference type="PROSITE-ProRule" id="PRU10035"/>
    </source>
</evidence>
<evidence type="ECO:0000255" key="4">
    <source>
        <dbReference type="PROSITE-ProRule" id="PRU10036"/>
    </source>
</evidence>
<evidence type="ECO:0000305" key="5"/>
<comment type="function">
    <text evidence="1">PLA2 catalyzes the calcium-dependent hydrolysis of the 2-acyl groups in 3-sn-phosphoglycerides.</text>
</comment>
<comment type="catalytic activity">
    <reaction evidence="3 4">
        <text>a 1,2-diacyl-sn-glycero-3-phosphocholine + H2O = a 1-acyl-sn-glycero-3-phosphocholine + a fatty acid + H(+)</text>
        <dbReference type="Rhea" id="RHEA:15801"/>
        <dbReference type="ChEBI" id="CHEBI:15377"/>
        <dbReference type="ChEBI" id="CHEBI:15378"/>
        <dbReference type="ChEBI" id="CHEBI:28868"/>
        <dbReference type="ChEBI" id="CHEBI:57643"/>
        <dbReference type="ChEBI" id="CHEBI:58168"/>
        <dbReference type="EC" id="3.1.1.4"/>
    </reaction>
</comment>
<comment type="cofactor">
    <cofactor evidence="1">
        <name>Ca(2+)</name>
        <dbReference type="ChEBI" id="CHEBI:29108"/>
    </cofactor>
    <text evidence="1">Binds 1 Ca(2+) ion.</text>
</comment>
<comment type="subcellular location">
    <subcellularLocation>
        <location evidence="1">Secreted</location>
    </subcellularLocation>
</comment>
<comment type="tissue specificity">
    <text>Expressed by the venom gland.</text>
</comment>
<comment type="similarity">
    <text evidence="5">Belongs to the phospholipase A2 family. Group I subfamily. D49 sub-subfamily.</text>
</comment>
<reference key="1">
    <citation type="submission" date="2000-01" db="EMBL/GenBank/DDBJ databases">
        <authorList>
            <person name="Tamiya T."/>
            <person name="Fujimi T.J."/>
        </authorList>
    </citation>
    <scope>NUCLEOTIDE SEQUENCE [MRNA]</scope>
    <source>
        <tissue>Venom gland</tissue>
    </source>
</reference>